<feature type="chain" id="PRO_0000047898" description="DNA-directed RNA polymerase subunit beta">
    <location>
        <begin position="1"/>
        <end position="1207"/>
    </location>
</feature>
<reference key="1">
    <citation type="journal article" date="2003" name="Science">
        <title>Role of mobile DNA in the evolution of vancomycin-resistant Enterococcus faecalis.</title>
        <authorList>
            <person name="Paulsen I.T."/>
            <person name="Banerjei L."/>
            <person name="Myers G.S.A."/>
            <person name="Nelson K.E."/>
            <person name="Seshadri R."/>
            <person name="Read T.D."/>
            <person name="Fouts D.E."/>
            <person name="Eisen J.A."/>
            <person name="Gill S.R."/>
            <person name="Heidelberg J.F."/>
            <person name="Tettelin H."/>
            <person name="Dodson R.J."/>
            <person name="Umayam L.A."/>
            <person name="Brinkac L.M."/>
            <person name="Beanan M.J."/>
            <person name="Daugherty S.C."/>
            <person name="DeBoy R.T."/>
            <person name="Durkin S.A."/>
            <person name="Kolonay J.F."/>
            <person name="Madupu R."/>
            <person name="Nelson W.C."/>
            <person name="Vamathevan J.J."/>
            <person name="Tran B."/>
            <person name="Upton J."/>
            <person name="Hansen T."/>
            <person name="Shetty J."/>
            <person name="Khouri H.M."/>
            <person name="Utterback T.R."/>
            <person name="Radune D."/>
            <person name="Ketchum K.A."/>
            <person name="Dougherty B.A."/>
            <person name="Fraser C.M."/>
        </authorList>
    </citation>
    <scope>NUCLEOTIDE SEQUENCE [LARGE SCALE GENOMIC DNA]</scope>
    <source>
        <strain>ATCC 700802 / V583</strain>
    </source>
</reference>
<name>RPOB_ENTFA</name>
<sequence length="1207" mass="135188">MKSLAGHVVKYGKHRERRSFARISEVLELPNLIEIQTDSYQWFLDEGLREMFEDILPIDDFQGNLSLEFVDYELKEPKYTVEEARAHDANYSAPLHVTLRLTNRETGEIKSQEVFFGDFPLMTEMGTFIINGAERVIVSQLVRSPGVYFHGKVDKNGKEGFGSTVIPNRGAWLEMETDAKDISYVRIDRTRKIPLTVLVRALGFGSDDTIFEIFGDSESLRNTIEKDLHKNASDSRTEEGLKDIYERLRPGEPKTADSSRSLLTARFFDPKRYDLANVGRYKVNKKLDLKTRLLNLTLAETLVDPETGEIIVEKGTVLTHQIMETLGEYIDNGLNSVTYYPSEDAVVTEPMTIQVIQVLSPKDPERIVNVIGNGYPDDSVKTVRPADIVASMSYFFNLMEDIGNVDDIDHLGNRRIRSVGELLQNQFRIGLARMERVVRERMSIQDTETLTPQQLINIRPVVASIKEFFGSSQLSQFMDQTNPLGELTHKRRLSALGPGGLTRDRAGYEVRDVHYSHYGRMCPIETPEGPNIGLINSLSSYAKVNKFGFIETPYRRVDRATGRVTDQVDYLTADIEDHYIVAQANSLLNEDGTFANDVVMARLQSENLEVAVDKVDYMDVSPKQVVAVATACIPFLENDDSNRALMGANMQRQAVPLIQPRSPWVGTGMEYKSAHDSGAALLCKHDGVVEFVDAKEIRVRRDNGALDKYMVTKFRRSNSGTSYNQRPIVHLGEKVEKGDTLADGPSMEEGEMALGQNVLVAFMTWEGYNYEDAIIMSRRLVKDDVYTSVHIEEYESEARDTKLGPEEITREIPNVGEDALKDLDEMGIIRIGAEVQDGDLLVGKVTPKGVTELSAEERLLHAIFGEKAREVRDTSLRVPHGGGGIVHDVKIFTREAGDELSPGVNMLVRVYIVQKRKIHEGDKMAGRHGNKGVVSRIMPEEDMPFLPDGTPVDIMLNPLGVPSRMNIGQVLELHLGMAARQLGIHVATPVFDGATDEDVWETVREAGMASDAKTVLYDGRTGEPFDNRISVGVMYMIKLAHMVDDKLHARSIGPYSLVTQQPLGGKAQFGGQRFGEMEVWALEAYGAAYTLQEILTYKSDDVVGRVKTYEAIVKGEPIPKPGVPESFRVLVKELQSLGLDMRVLDIEEAEIELRDMDDDDDDLITVDALTKFAEQQSAKQLEKEAESVVKEEAQDVVQEIETAEDRD</sequence>
<keyword id="KW-0240">DNA-directed RNA polymerase</keyword>
<keyword id="KW-0548">Nucleotidyltransferase</keyword>
<keyword id="KW-1185">Reference proteome</keyword>
<keyword id="KW-0804">Transcription</keyword>
<keyword id="KW-0808">Transferase</keyword>
<accession>Q82Z40</accession>
<protein>
    <recommendedName>
        <fullName evidence="1">DNA-directed RNA polymerase subunit beta</fullName>
        <shortName evidence="1">RNAP subunit beta</shortName>
        <ecNumber evidence="1">2.7.7.6</ecNumber>
    </recommendedName>
    <alternativeName>
        <fullName evidence="1">RNA polymerase subunit beta</fullName>
    </alternativeName>
    <alternativeName>
        <fullName evidence="1">Transcriptase subunit beta</fullName>
    </alternativeName>
</protein>
<organism>
    <name type="scientific">Enterococcus faecalis (strain ATCC 700802 / V583)</name>
    <dbReference type="NCBI Taxonomy" id="226185"/>
    <lineage>
        <taxon>Bacteria</taxon>
        <taxon>Bacillati</taxon>
        <taxon>Bacillota</taxon>
        <taxon>Bacilli</taxon>
        <taxon>Lactobacillales</taxon>
        <taxon>Enterococcaceae</taxon>
        <taxon>Enterococcus</taxon>
    </lineage>
</organism>
<comment type="function">
    <text evidence="1">DNA-dependent RNA polymerase catalyzes the transcription of DNA into RNA using the four ribonucleoside triphosphates as substrates.</text>
</comment>
<comment type="catalytic activity">
    <reaction evidence="1">
        <text>RNA(n) + a ribonucleoside 5'-triphosphate = RNA(n+1) + diphosphate</text>
        <dbReference type="Rhea" id="RHEA:21248"/>
        <dbReference type="Rhea" id="RHEA-COMP:14527"/>
        <dbReference type="Rhea" id="RHEA-COMP:17342"/>
        <dbReference type="ChEBI" id="CHEBI:33019"/>
        <dbReference type="ChEBI" id="CHEBI:61557"/>
        <dbReference type="ChEBI" id="CHEBI:140395"/>
        <dbReference type="EC" id="2.7.7.6"/>
    </reaction>
</comment>
<comment type="subunit">
    <text evidence="1">The RNAP catalytic core consists of 2 alpha, 1 beta, 1 beta' and 1 omega subunit. When a sigma factor is associated with the core the holoenzyme is formed, which can initiate transcription.</text>
</comment>
<comment type="similarity">
    <text evidence="1">Belongs to the RNA polymerase beta chain family.</text>
</comment>
<dbReference type="EC" id="2.7.7.6" evidence="1"/>
<dbReference type="EMBL" id="AE016830">
    <property type="protein sequence ID" value="AAO82906.1"/>
    <property type="molecule type" value="Genomic_DNA"/>
</dbReference>
<dbReference type="RefSeq" id="NP_816836.1">
    <property type="nucleotide sequence ID" value="NC_004668.1"/>
</dbReference>
<dbReference type="SMR" id="Q82Z40"/>
<dbReference type="STRING" id="226185.EF_3238"/>
<dbReference type="EnsemblBacteria" id="AAO82906">
    <property type="protein sequence ID" value="AAO82906"/>
    <property type="gene ID" value="EF_3238"/>
</dbReference>
<dbReference type="KEGG" id="efa:EF3238"/>
<dbReference type="PATRIC" id="fig|226185.9.peg.3018"/>
<dbReference type="eggNOG" id="COG0085">
    <property type="taxonomic scope" value="Bacteria"/>
</dbReference>
<dbReference type="HOGENOM" id="CLU_000524_4_1_9"/>
<dbReference type="Proteomes" id="UP000001415">
    <property type="component" value="Chromosome"/>
</dbReference>
<dbReference type="GO" id="GO:0000428">
    <property type="term" value="C:DNA-directed RNA polymerase complex"/>
    <property type="evidence" value="ECO:0007669"/>
    <property type="project" value="UniProtKB-KW"/>
</dbReference>
<dbReference type="GO" id="GO:0003677">
    <property type="term" value="F:DNA binding"/>
    <property type="evidence" value="ECO:0007669"/>
    <property type="project" value="UniProtKB-UniRule"/>
</dbReference>
<dbReference type="GO" id="GO:0003899">
    <property type="term" value="F:DNA-directed RNA polymerase activity"/>
    <property type="evidence" value="ECO:0007669"/>
    <property type="project" value="UniProtKB-UniRule"/>
</dbReference>
<dbReference type="GO" id="GO:0032549">
    <property type="term" value="F:ribonucleoside binding"/>
    <property type="evidence" value="ECO:0007669"/>
    <property type="project" value="InterPro"/>
</dbReference>
<dbReference type="GO" id="GO:0006351">
    <property type="term" value="P:DNA-templated transcription"/>
    <property type="evidence" value="ECO:0007669"/>
    <property type="project" value="UniProtKB-UniRule"/>
</dbReference>
<dbReference type="CDD" id="cd00653">
    <property type="entry name" value="RNA_pol_B_RPB2"/>
    <property type="match status" value="1"/>
</dbReference>
<dbReference type="FunFam" id="3.90.1800.10:FF:000001">
    <property type="entry name" value="DNA-directed RNA polymerase subunit beta"/>
    <property type="match status" value="1"/>
</dbReference>
<dbReference type="Gene3D" id="2.40.50.100">
    <property type="match status" value="1"/>
</dbReference>
<dbReference type="Gene3D" id="2.40.50.150">
    <property type="match status" value="1"/>
</dbReference>
<dbReference type="Gene3D" id="3.90.1100.10">
    <property type="match status" value="2"/>
</dbReference>
<dbReference type="Gene3D" id="2.30.150.10">
    <property type="entry name" value="DNA-directed RNA polymerase, beta subunit, external 1 domain"/>
    <property type="match status" value="1"/>
</dbReference>
<dbReference type="Gene3D" id="2.40.270.10">
    <property type="entry name" value="DNA-directed RNA polymerase, subunit 2, domain 6"/>
    <property type="match status" value="1"/>
</dbReference>
<dbReference type="Gene3D" id="3.90.1800.10">
    <property type="entry name" value="RNA polymerase alpha subunit dimerisation domain"/>
    <property type="match status" value="1"/>
</dbReference>
<dbReference type="Gene3D" id="3.90.1110.10">
    <property type="entry name" value="RNA polymerase Rpb2, domain 2"/>
    <property type="match status" value="1"/>
</dbReference>
<dbReference type="HAMAP" id="MF_01321">
    <property type="entry name" value="RNApol_bact_RpoB"/>
    <property type="match status" value="1"/>
</dbReference>
<dbReference type="InterPro" id="IPR042107">
    <property type="entry name" value="DNA-dir_RNA_pol_bsu_ext_1_sf"/>
</dbReference>
<dbReference type="InterPro" id="IPR019462">
    <property type="entry name" value="DNA-dir_RNA_pol_bsu_external_1"/>
</dbReference>
<dbReference type="InterPro" id="IPR015712">
    <property type="entry name" value="DNA-dir_RNA_pol_su2"/>
</dbReference>
<dbReference type="InterPro" id="IPR007120">
    <property type="entry name" value="DNA-dir_RNAP_su2_dom"/>
</dbReference>
<dbReference type="InterPro" id="IPR037033">
    <property type="entry name" value="DNA-dir_RNAP_su2_hyb_sf"/>
</dbReference>
<dbReference type="InterPro" id="IPR010243">
    <property type="entry name" value="RNA_pol_bsu_bac"/>
</dbReference>
<dbReference type="InterPro" id="IPR007121">
    <property type="entry name" value="RNA_pol_bsu_CS"/>
</dbReference>
<dbReference type="InterPro" id="IPR007644">
    <property type="entry name" value="RNA_pol_bsu_protrusion"/>
</dbReference>
<dbReference type="InterPro" id="IPR007642">
    <property type="entry name" value="RNA_pol_Rpb2_2"/>
</dbReference>
<dbReference type="InterPro" id="IPR037034">
    <property type="entry name" value="RNA_pol_Rpb2_2_sf"/>
</dbReference>
<dbReference type="InterPro" id="IPR007645">
    <property type="entry name" value="RNA_pol_Rpb2_3"/>
</dbReference>
<dbReference type="InterPro" id="IPR007641">
    <property type="entry name" value="RNA_pol_Rpb2_7"/>
</dbReference>
<dbReference type="InterPro" id="IPR014724">
    <property type="entry name" value="RNA_pol_RPB2_OB-fold"/>
</dbReference>
<dbReference type="NCBIfam" id="NF001616">
    <property type="entry name" value="PRK00405.1"/>
    <property type="match status" value="1"/>
</dbReference>
<dbReference type="NCBIfam" id="TIGR02013">
    <property type="entry name" value="rpoB"/>
    <property type="match status" value="1"/>
</dbReference>
<dbReference type="PANTHER" id="PTHR20856">
    <property type="entry name" value="DNA-DIRECTED RNA POLYMERASE I SUBUNIT 2"/>
    <property type="match status" value="1"/>
</dbReference>
<dbReference type="Pfam" id="PF04563">
    <property type="entry name" value="RNA_pol_Rpb2_1"/>
    <property type="match status" value="1"/>
</dbReference>
<dbReference type="Pfam" id="PF04561">
    <property type="entry name" value="RNA_pol_Rpb2_2"/>
    <property type="match status" value="2"/>
</dbReference>
<dbReference type="Pfam" id="PF04565">
    <property type="entry name" value="RNA_pol_Rpb2_3"/>
    <property type="match status" value="1"/>
</dbReference>
<dbReference type="Pfam" id="PF10385">
    <property type="entry name" value="RNA_pol_Rpb2_45"/>
    <property type="match status" value="1"/>
</dbReference>
<dbReference type="Pfam" id="PF00562">
    <property type="entry name" value="RNA_pol_Rpb2_6"/>
    <property type="match status" value="1"/>
</dbReference>
<dbReference type="Pfam" id="PF04560">
    <property type="entry name" value="RNA_pol_Rpb2_7"/>
    <property type="match status" value="1"/>
</dbReference>
<dbReference type="SUPFAM" id="SSF64484">
    <property type="entry name" value="beta and beta-prime subunits of DNA dependent RNA-polymerase"/>
    <property type="match status" value="1"/>
</dbReference>
<dbReference type="PROSITE" id="PS01166">
    <property type="entry name" value="RNA_POL_BETA"/>
    <property type="match status" value="1"/>
</dbReference>
<proteinExistence type="inferred from homology"/>
<gene>
    <name evidence="1" type="primary">rpoB</name>
    <name type="ordered locus">EF_3238</name>
</gene>
<evidence type="ECO:0000255" key="1">
    <source>
        <dbReference type="HAMAP-Rule" id="MF_01321"/>
    </source>
</evidence>